<name>ACT6_DIBDE</name>
<gene>
    <name type="primary">ACT6</name>
</gene>
<keyword id="KW-0067">ATP-binding</keyword>
<keyword id="KW-0963">Cytoplasm</keyword>
<keyword id="KW-0206">Cytoskeleton</keyword>
<keyword id="KW-0378">Hydrolase</keyword>
<keyword id="KW-0547">Nucleotide-binding</keyword>
<evidence type="ECO:0000250" key="1">
    <source>
        <dbReference type="UniProtKB" id="P68137"/>
    </source>
</evidence>
<evidence type="ECO:0000305" key="2"/>
<organism>
    <name type="scientific">Dibothriocephalus dendriticus</name>
    <name type="common">Tapeworm</name>
    <name type="synonym">Diphyllobothrium dendriticum</name>
    <dbReference type="NCBI Taxonomy" id="28845"/>
    <lineage>
        <taxon>Eukaryota</taxon>
        <taxon>Metazoa</taxon>
        <taxon>Spiralia</taxon>
        <taxon>Lophotrochozoa</taxon>
        <taxon>Platyhelminthes</taxon>
        <taxon>Cestoda</taxon>
        <taxon>Eucestoda</taxon>
        <taxon>Diphyllobothriidea</taxon>
        <taxon>Diphyllobothriidae</taxon>
        <taxon>Dibothriocephalus</taxon>
    </lineage>
</organism>
<reference key="1">
    <citation type="journal article" date="1997" name="J. Mol. Evol.">
        <title>Isolation and characterization of five actin cDNAs from the cestode Diphyllobothrium dendriticum: a phylogenetic study of the multigene family.</title>
        <authorList>
            <person name="Wahlberg M.H."/>
            <person name="Johnson M.S."/>
        </authorList>
    </citation>
    <scope>NUCLEOTIDE SEQUENCE [MRNA]</scope>
</reference>
<protein>
    <recommendedName>
        <fullName>Actin-6</fullName>
        <ecNumber evidence="1">3.6.4.-</ecNumber>
    </recommendedName>
</protein>
<accession>P53459</accession>
<proteinExistence type="evidence at transcript level"/>
<comment type="function">
    <text>Actins are highly conserved proteins that are involved in various types of cell motility and are ubiquitously expressed in all eukaryotic cells.</text>
</comment>
<comment type="catalytic activity">
    <reaction evidence="1">
        <text>ATP + H2O = ADP + phosphate + H(+)</text>
        <dbReference type="Rhea" id="RHEA:13065"/>
        <dbReference type="ChEBI" id="CHEBI:15377"/>
        <dbReference type="ChEBI" id="CHEBI:15378"/>
        <dbReference type="ChEBI" id="CHEBI:30616"/>
        <dbReference type="ChEBI" id="CHEBI:43474"/>
        <dbReference type="ChEBI" id="CHEBI:456216"/>
    </reaction>
</comment>
<comment type="subcellular location">
    <subcellularLocation>
        <location>Cytoplasm</location>
        <location>Cytoskeleton</location>
    </subcellularLocation>
</comment>
<comment type="similarity">
    <text evidence="2">Belongs to the actin family.</text>
</comment>
<sequence length="373" mass="41523">EEVQPLVVDNGSGMCKAGFAGDDSPRAVFPSIVGRPRQQSIMVGMGNKDSYVGDEAQSKRGILSLKYPIEHGIVTNWDDMEKIWHHTFYNELRVAPEEHPVLLTEAPLNPKANREKMTSIMFETFNCPAMYVAIQAVLSLYASGRTTGIVLDSGDGVSHTVPIYEGYALPHAILRLDLAGRDLTDYLMKILTERGYSFTTTAEREIVRDIKEKLCYVALDFENEMATAASSSSLEKSYELPDGQVITVGNERFRCPEALFQPSFLGLESVGIHETCYNSIMKCDLDIRKDLYSNIVLSGGSTMYPGIADRMNKELTSLAPSSMKIKIIAPPERKYSVWIGGSILGSLSTFQQMWITKQEYDESGPSIVHRKCF</sequence>
<feature type="chain" id="PRO_0000088932" description="Actin-6">
    <location>
        <begin position="1" status="less than"/>
        <end position="373"/>
    </location>
</feature>
<feature type="non-terminal residue">
    <location>
        <position position="1"/>
    </location>
</feature>
<dbReference type="EC" id="3.6.4.-" evidence="1"/>
<dbReference type="EMBL" id="U27837">
    <property type="protein sequence ID" value="AAA82604.1"/>
    <property type="molecule type" value="mRNA"/>
</dbReference>
<dbReference type="SMR" id="P53459"/>
<dbReference type="GO" id="GO:0005737">
    <property type="term" value="C:cytoplasm"/>
    <property type="evidence" value="ECO:0007669"/>
    <property type="project" value="UniProtKB-KW"/>
</dbReference>
<dbReference type="GO" id="GO:0005856">
    <property type="term" value="C:cytoskeleton"/>
    <property type="evidence" value="ECO:0007669"/>
    <property type="project" value="UniProtKB-SubCell"/>
</dbReference>
<dbReference type="GO" id="GO:0005524">
    <property type="term" value="F:ATP binding"/>
    <property type="evidence" value="ECO:0007669"/>
    <property type="project" value="UniProtKB-KW"/>
</dbReference>
<dbReference type="GO" id="GO:0016787">
    <property type="term" value="F:hydrolase activity"/>
    <property type="evidence" value="ECO:0007669"/>
    <property type="project" value="UniProtKB-KW"/>
</dbReference>
<dbReference type="CDD" id="cd10224">
    <property type="entry name" value="ASKHA_NBD_actin"/>
    <property type="match status" value="1"/>
</dbReference>
<dbReference type="FunFam" id="2.30.36.70:FF:000001">
    <property type="entry name" value="Actin, alpha skeletal muscle"/>
    <property type="match status" value="1"/>
</dbReference>
<dbReference type="FunFam" id="3.30.420.40:FF:000291">
    <property type="entry name" value="Actin, alpha skeletal muscle"/>
    <property type="match status" value="1"/>
</dbReference>
<dbReference type="FunFam" id="3.90.640.10:FF:000047">
    <property type="entry name" value="Actin, alpha skeletal muscle"/>
    <property type="match status" value="1"/>
</dbReference>
<dbReference type="FunFam" id="3.30.420.40:FF:000404">
    <property type="entry name" value="Major actin"/>
    <property type="match status" value="1"/>
</dbReference>
<dbReference type="FunFam" id="3.30.420.40:FF:000058">
    <property type="entry name" value="Putative actin-related protein 5"/>
    <property type="match status" value="1"/>
</dbReference>
<dbReference type="Gene3D" id="3.30.420.40">
    <property type="match status" value="2"/>
</dbReference>
<dbReference type="Gene3D" id="3.90.640.10">
    <property type="entry name" value="Actin, Chain A, domain 4"/>
    <property type="match status" value="1"/>
</dbReference>
<dbReference type="InterPro" id="IPR004000">
    <property type="entry name" value="Actin"/>
</dbReference>
<dbReference type="InterPro" id="IPR020902">
    <property type="entry name" value="Actin/actin-like_CS"/>
</dbReference>
<dbReference type="InterPro" id="IPR004001">
    <property type="entry name" value="Actin_CS"/>
</dbReference>
<dbReference type="InterPro" id="IPR043129">
    <property type="entry name" value="ATPase_NBD"/>
</dbReference>
<dbReference type="PANTHER" id="PTHR11937">
    <property type="entry name" value="ACTIN"/>
    <property type="match status" value="1"/>
</dbReference>
<dbReference type="Pfam" id="PF00022">
    <property type="entry name" value="Actin"/>
    <property type="match status" value="1"/>
</dbReference>
<dbReference type="PRINTS" id="PR00190">
    <property type="entry name" value="ACTIN"/>
</dbReference>
<dbReference type="SMART" id="SM00268">
    <property type="entry name" value="ACTIN"/>
    <property type="match status" value="1"/>
</dbReference>
<dbReference type="SUPFAM" id="SSF53067">
    <property type="entry name" value="Actin-like ATPase domain"/>
    <property type="match status" value="2"/>
</dbReference>
<dbReference type="PROSITE" id="PS00406">
    <property type="entry name" value="ACTINS_1"/>
    <property type="match status" value="1"/>
</dbReference>
<dbReference type="PROSITE" id="PS00432">
    <property type="entry name" value="ACTINS_2"/>
    <property type="match status" value="1"/>
</dbReference>
<dbReference type="PROSITE" id="PS01132">
    <property type="entry name" value="ACTINS_ACT_LIKE"/>
    <property type="match status" value="1"/>
</dbReference>